<reference key="1">
    <citation type="submission" date="2007-06" db="EMBL/GenBank/DDBJ databases">
        <title>Complete sequence of chromosome of Staphylococcus aureus subsp. aureus JH1.</title>
        <authorList>
            <consortium name="US DOE Joint Genome Institute"/>
            <person name="Copeland A."/>
            <person name="Lucas S."/>
            <person name="Lapidus A."/>
            <person name="Barry K."/>
            <person name="Detter J.C."/>
            <person name="Glavina del Rio T."/>
            <person name="Hammon N."/>
            <person name="Israni S."/>
            <person name="Dalin E."/>
            <person name="Tice H."/>
            <person name="Pitluck S."/>
            <person name="Chain P."/>
            <person name="Malfatti S."/>
            <person name="Shin M."/>
            <person name="Vergez L."/>
            <person name="Schmutz J."/>
            <person name="Larimer F."/>
            <person name="Land M."/>
            <person name="Hauser L."/>
            <person name="Kyrpides N."/>
            <person name="Ivanova N."/>
            <person name="Tomasz A."/>
            <person name="Richardson P."/>
        </authorList>
    </citation>
    <scope>NUCLEOTIDE SEQUENCE [LARGE SCALE GENOMIC DNA]</scope>
    <source>
        <strain>JH1</strain>
    </source>
</reference>
<dbReference type="EMBL" id="CP000736">
    <property type="protein sequence ID" value="ABR53116.1"/>
    <property type="molecule type" value="Genomic_DNA"/>
</dbReference>
<dbReference type="SMR" id="A6U3U8"/>
<dbReference type="KEGG" id="sah:SaurJH1_2291"/>
<dbReference type="HOGENOM" id="CLU_074407_2_2_9"/>
<dbReference type="GO" id="GO:0022625">
    <property type="term" value="C:cytosolic large ribosomal subunit"/>
    <property type="evidence" value="ECO:0007669"/>
    <property type="project" value="TreeGrafter"/>
</dbReference>
<dbReference type="GO" id="GO:0003735">
    <property type="term" value="F:structural constituent of ribosome"/>
    <property type="evidence" value="ECO:0007669"/>
    <property type="project" value="InterPro"/>
</dbReference>
<dbReference type="GO" id="GO:0006412">
    <property type="term" value="P:translation"/>
    <property type="evidence" value="ECO:0007669"/>
    <property type="project" value="UniProtKB-UniRule"/>
</dbReference>
<dbReference type="FunFam" id="3.90.1030.10:FF:000002">
    <property type="entry name" value="50S ribosomal protein L17"/>
    <property type="match status" value="1"/>
</dbReference>
<dbReference type="Gene3D" id="3.90.1030.10">
    <property type="entry name" value="Ribosomal protein L17"/>
    <property type="match status" value="1"/>
</dbReference>
<dbReference type="HAMAP" id="MF_01368">
    <property type="entry name" value="Ribosomal_bL17"/>
    <property type="match status" value="1"/>
</dbReference>
<dbReference type="InterPro" id="IPR000456">
    <property type="entry name" value="Ribosomal_bL17"/>
</dbReference>
<dbReference type="InterPro" id="IPR047859">
    <property type="entry name" value="Ribosomal_bL17_CS"/>
</dbReference>
<dbReference type="InterPro" id="IPR036373">
    <property type="entry name" value="Ribosomal_bL17_sf"/>
</dbReference>
<dbReference type="NCBIfam" id="TIGR00059">
    <property type="entry name" value="L17"/>
    <property type="match status" value="1"/>
</dbReference>
<dbReference type="PANTHER" id="PTHR14413:SF16">
    <property type="entry name" value="LARGE RIBOSOMAL SUBUNIT PROTEIN BL17M"/>
    <property type="match status" value="1"/>
</dbReference>
<dbReference type="PANTHER" id="PTHR14413">
    <property type="entry name" value="RIBOSOMAL PROTEIN L17"/>
    <property type="match status" value="1"/>
</dbReference>
<dbReference type="Pfam" id="PF01196">
    <property type="entry name" value="Ribosomal_L17"/>
    <property type="match status" value="1"/>
</dbReference>
<dbReference type="SUPFAM" id="SSF64263">
    <property type="entry name" value="Prokaryotic ribosomal protein L17"/>
    <property type="match status" value="1"/>
</dbReference>
<dbReference type="PROSITE" id="PS01167">
    <property type="entry name" value="RIBOSOMAL_L17"/>
    <property type="match status" value="1"/>
</dbReference>
<comment type="subunit">
    <text evidence="1">Part of the 50S ribosomal subunit. Contacts protein L32.</text>
</comment>
<comment type="similarity">
    <text evidence="1">Belongs to the bacterial ribosomal protein bL17 family.</text>
</comment>
<protein>
    <recommendedName>
        <fullName evidence="1">Large ribosomal subunit protein bL17</fullName>
    </recommendedName>
    <alternativeName>
        <fullName evidence="2">50S ribosomal protein L17</fullName>
    </alternativeName>
</protein>
<feature type="chain" id="PRO_1000087197" description="Large ribosomal subunit protein bL17">
    <location>
        <begin position="1"/>
        <end position="122"/>
    </location>
</feature>
<name>RL17_STAA2</name>
<gene>
    <name evidence="1" type="primary">rplQ</name>
    <name type="ordered locus">SaurJH1_2291</name>
</gene>
<sequence length="122" mass="13748">MGYRKLGRTSDQRKAMLRDLATSLIISERIETTEARAKEVRSVVEKLITLGKKGDLASRRNAAKTLRNVEILNEDETTQTALQKLFGEIAERYTERQGGYTRILKQGPRRGDGAESVIIELV</sequence>
<keyword id="KW-0687">Ribonucleoprotein</keyword>
<keyword id="KW-0689">Ribosomal protein</keyword>
<proteinExistence type="inferred from homology"/>
<accession>A6U3U8</accession>
<organism>
    <name type="scientific">Staphylococcus aureus (strain JH1)</name>
    <dbReference type="NCBI Taxonomy" id="359787"/>
    <lineage>
        <taxon>Bacteria</taxon>
        <taxon>Bacillati</taxon>
        <taxon>Bacillota</taxon>
        <taxon>Bacilli</taxon>
        <taxon>Bacillales</taxon>
        <taxon>Staphylococcaceae</taxon>
        <taxon>Staphylococcus</taxon>
    </lineage>
</organism>
<evidence type="ECO:0000255" key="1">
    <source>
        <dbReference type="HAMAP-Rule" id="MF_01368"/>
    </source>
</evidence>
<evidence type="ECO:0000305" key="2"/>